<feature type="chain" id="PRO_0000180153" description="Acyl carrier protein">
    <location>
        <begin position="1"/>
        <end position="76"/>
    </location>
</feature>
<feature type="domain" description="Carrier" evidence="2">
    <location>
        <begin position="1"/>
        <end position="76"/>
    </location>
</feature>
<feature type="modified residue" description="O-(pantetheine 4'-phosphoryl)serine" evidence="2">
    <location>
        <position position="36"/>
    </location>
</feature>
<gene>
    <name evidence="1" type="primary">acpP</name>
    <name type="ordered locus">MS1875</name>
</gene>
<dbReference type="EMBL" id="AE016827">
    <property type="protein sequence ID" value="AAU38482.1"/>
    <property type="molecule type" value="Genomic_DNA"/>
</dbReference>
<dbReference type="RefSeq" id="WP_005759872.1">
    <property type="nucleotide sequence ID" value="NC_006300.1"/>
</dbReference>
<dbReference type="SMR" id="Q65RC8"/>
<dbReference type="STRING" id="221988.MS1875"/>
<dbReference type="KEGG" id="msu:MS1875"/>
<dbReference type="eggNOG" id="COG0236">
    <property type="taxonomic scope" value="Bacteria"/>
</dbReference>
<dbReference type="HOGENOM" id="CLU_108696_5_1_6"/>
<dbReference type="OrthoDB" id="9804551at2"/>
<dbReference type="UniPathway" id="UPA00094"/>
<dbReference type="Proteomes" id="UP000000607">
    <property type="component" value="Chromosome"/>
</dbReference>
<dbReference type="GO" id="GO:0005829">
    <property type="term" value="C:cytosol"/>
    <property type="evidence" value="ECO:0007669"/>
    <property type="project" value="TreeGrafter"/>
</dbReference>
<dbReference type="GO" id="GO:0016020">
    <property type="term" value="C:membrane"/>
    <property type="evidence" value="ECO:0007669"/>
    <property type="project" value="GOC"/>
</dbReference>
<dbReference type="GO" id="GO:0000035">
    <property type="term" value="F:acyl binding"/>
    <property type="evidence" value="ECO:0007669"/>
    <property type="project" value="TreeGrafter"/>
</dbReference>
<dbReference type="GO" id="GO:0000036">
    <property type="term" value="F:acyl carrier activity"/>
    <property type="evidence" value="ECO:0007669"/>
    <property type="project" value="UniProtKB-UniRule"/>
</dbReference>
<dbReference type="GO" id="GO:0009245">
    <property type="term" value="P:lipid A biosynthetic process"/>
    <property type="evidence" value="ECO:0007669"/>
    <property type="project" value="TreeGrafter"/>
</dbReference>
<dbReference type="FunFam" id="1.10.1200.10:FF:000001">
    <property type="entry name" value="Acyl carrier protein"/>
    <property type="match status" value="1"/>
</dbReference>
<dbReference type="Gene3D" id="1.10.1200.10">
    <property type="entry name" value="ACP-like"/>
    <property type="match status" value="1"/>
</dbReference>
<dbReference type="HAMAP" id="MF_01217">
    <property type="entry name" value="Acyl_carrier"/>
    <property type="match status" value="1"/>
</dbReference>
<dbReference type="InterPro" id="IPR003231">
    <property type="entry name" value="ACP"/>
</dbReference>
<dbReference type="InterPro" id="IPR036736">
    <property type="entry name" value="ACP-like_sf"/>
</dbReference>
<dbReference type="InterPro" id="IPR009081">
    <property type="entry name" value="PP-bd_ACP"/>
</dbReference>
<dbReference type="InterPro" id="IPR006162">
    <property type="entry name" value="Ppantetheine_attach_site"/>
</dbReference>
<dbReference type="NCBIfam" id="TIGR00517">
    <property type="entry name" value="acyl_carrier"/>
    <property type="match status" value="1"/>
</dbReference>
<dbReference type="NCBIfam" id="NF002148">
    <property type="entry name" value="PRK00982.1-2"/>
    <property type="match status" value="1"/>
</dbReference>
<dbReference type="NCBIfam" id="NF002149">
    <property type="entry name" value="PRK00982.1-3"/>
    <property type="match status" value="1"/>
</dbReference>
<dbReference type="NCBIfam" id="NF002150">
    <property type="entry name" value="PRK00982.1-4"/>
    <property type="match status" value="1"/>
</dbReference>
<dbReference type="NCBIfam" id="NF002151">
    <property type="entry name" value="PRK00982.1-5"/>
    <property type="match status" value="1"/>
</dbReference>
<dbReference type="PANTHER" id="PTHR20863">
    <property type="entry name" value="ACYL CARRIER PROTEIN"/>
    <property type="match status" value="1"/>
</dbReference>
<dbReference type="PANTHER" id="PTHR20863:SF76">
    <property type="entry name" value="CARRIER DOMAIN-CONTAINING PROTEIN"/>
    <property type="match status" value="1"/>
</dbReference>
<dbReference type="Pfam" id="PF00550">
    <property type="entry name" value="PP-binding"/>
    <property type="match status" value="1"/>
</dbReference>
<dbReference type="SUPFAM" id="SSF47336">
    <property type="entry name" value="ACP-like"/>
    <property type="match status" value="1"/>
</dbReference>
<dbReference type="PROSITE" id="PS50075">
    <property type="entry name" value="CARRIER"/>
    <property type="match status" value="1"/>
</dbReference>
<dbReference type="PROSITE" id="PS00012">
    <property type="entry name" value="PHOSPHOPANTETHEINE"/>
    <property type="match status" value="1"/>
</dbReference>
<protein>
    <recommendedName>
        <fullName evidence="1">Acyl carrier protein</fullName>
        <shortName evidence="1">ACP</shortName>
    </recommendedName>
</protein>
<organism>
    <name type="scientific">Mannheimia succiniciproducens (strain KCTC 0769BP / MBEL55E)</name>
    <dbReference type="NCBI Taxonomy" id="221988"/>
    <lineage>
        <taxon>Bacteria</taxon>
        <taxon>Pseudomonadati</taxon>
        <taxon>Pseudomonadota</taxon>
        <taxon>Gammaproteobacteria</taxon>
        <taxon>Pasteurellales</taxon>
        <taxon>Pasteurellaceae</taxon>
        <taxon>Basfia</taxon>
    </lineage>
</organism>
<proteinExistence type="inferred from homology"/>
<comment type="function">
    <text evidence="1">Carrier of the growing fatty acid chain in fatty acid biosynthesis.</text>
</comment>
<comment type="pathway">
    <text evidence="1">Lipid metabolism; fatty acid biosynthesis.</text>
</comment>
<comment type="subcellular location">
    <subcellularLocation>
        <location evidence="1">Cytoplasm</location>
    </subcellularLocation>
</comment>
<comment type="PTM">
    <text evidence="1">4'-phosphopantetheine is transferred from CoA to a specific serine of apo-ACP by AcpS. This modification is essential for activity because fatty acids are bound in thioester linkage to the sulfhydryl of the prosthetic group.</text>
</comment>
<comment type="similarity">
    <text evidence="1">Belongs to the acyl carrier protein (ACP) family.</text>
</comment>
<evidence type="ECO:0000255" key="1">
    <source>
        <dbReference type="HAMAP-Rule" id="MF_01217"/>
    </source>
</evidence>
<evidence type="ECO:0000255" key="2">
    <source>
        <dbReference type="PROSITE-ProRule" id="PRU00258"/>
    </source>
</evidence>
<keyword id="KW-0963">Cytoplasm</keyword>
<keyword id="KW-0275">Fatty acid biosynthesis</keyword>
<keyword id="KW-0276">Fatty acid metabolism</keyword>
<keyword id="KW-0444">Lipid biosynthesis</keyword>
<keyword id="KW-0443">Lipid metabolism</keyword>
<keyword id="KW-0596">Phosphopantetheine</keyword>
<keyword id="KW-0597">Phosphoprotein</keyword>
<reference key="1">
    <citation type="journal article" date="2004" name="Nat. Biotechnol.">
        <title>The genome sequence of the capnophilic rumen bacterium Mannheimia succiniciproducens.</title>
        <authorList>
            <person name="Hong S.H."/>
            <person name="Kim J.S."/>
            <person name="Lee S.Y."/>
            <person name="In Y.H."/>
            <person name="Choi S.S."/>
            <person name="Rih J.-K."/>
            <person name="Kim C.H."/>
            <person name="Jeong H."/>
            <person name="Hur C.G."/>
            <person name="Kim J.J."/>
        </authorList>
    </citation>
    <scope>NUCLEOTIDE SEQUENCE [LARGE SCALE GENOMIC DNA]</scope>
    <source>
        <strain>KCTC 0769BP / MBEL55E</strain>
    </source>
</reference>
<sequence length="76" mass="8588">MSIEERVKKIIVDQLGVKEEEVKSEASFIEDLGADSLDTVELVMALEEEFDIEIPDEEAEKITTVQSAIDYVQNNQ</sequence>
<accession>Q65RC8</accession>
<name>ACP_MANSM</name>